<feature type="chain" id="PRO_0000413795" description="Cell division protein ZapC">
    <location>
        <begin position="1"/>
        <end position="183"/>
    </location>
</feature>
<keyword id="KW-0131">Cell cycle</keyword>
<keyword id="KW-0132">Cell division</keyword>
<keyword id="KW-0963">Cytoplasm</keyword>
<keyword id="KW-0717">Septation</keyword>
<dbReference type="EMBL" id="FN667741">
    <property type="protein sequence ID" value="CBJ79930.1"/>
    <property type="molecule type" value="Genomic_DNA"/>
</dbReference>
<dbReference type="RefSeq" id="WP_012987363.1">
    <property type="nucleotide sequence ID" value="NC_013892.1"/>
</dbReference>
<dbReference type="SMR" id="D3UWU5"/>
<dbReference type="STRING" id="406818.XBJ1_0789"/>
<dbReference type="KEGG" id="xbo:XBJ1_0789"/>
<dbReference type="PATRIC" id="fig|406818.4.peg.711"/>
<dbReference type="eggNOG" id="ENOG502Z8AH">
    <property type="taxonomic scope" value="Bacteria"/>
</dbReference>
<dbReference type="HOGENOM" id="CLU_128248_0_0_6"/>
<dbReference type="Proteomes" id="UP000002045">
    <property type="component" value="Chromosome"/>
</dbReference>
<dbReference type="GO" id="GO:0005737">
    <property type="term" value="C:cytoplasm"/>
    <property type="evidence" value="ECO:0007669"/>
    <property type="project" value="UniProtKB-SubCell"/>
</dbReference>
<dbReference type="GO" id="GO:0000917">
    <property type="term" value="P:division septum assembly"/>
    <property type="evidence" value="ECO:0007669"/>
    <property type="project" value="UniProtKB-KW"/>
</dbReference>
<dbReference type="GO" id="GO:0043093">
    <property type="term" value="P:FtsZ-dependent cytokinesis"/>
    <property type="evidence" value="ECO:0007669"/>
    <property type="project" value="UniProtKB-UniRule"/>
</dbReference>
<dbReference type="HAMAP" id="MF_00906">
    <property type="entry name" value="ZapC"/>
    <property type="match status" value="1"/>
</dbReference>
<dbReference type="InterPro" id="IPR009809">
    <property type="entry name" value="ZapC"/>
</dbReference>
<dbReference type="InterPro" id="IPR048372">
    <property type="entry name" value="ZapC_C"/>
</dbReference>
<dbReference type="InterPro" id="IPR048373">
    <property type="entry name" value="ZapC_N"/>
</dbReference>
<dbReference type="Pfam" id="PF07126">
    <property type="entry name" value="ZapC_C"/>
    <property type="match status" value="1"/>
</dbReference>
<dbReference type="Pfam" id="PF21083">
    <property type="entry name" value="ZapC_N"/>
    <property type="match status" value="1"/>
</dbReference>
<dbReference type="PIRSF" id="PIRSF010252">
    <property type="entry name" value="ZapC"/>
    <property type="match status" value="1"/>
</dbReference>
<gene>
    <name evidence="1" type="primary">zapC</name>
    <name type="ordered locus">XBJ1_0789</name>
</gene>
<organism>
    <name type="scientific">Xenorhabdus bovienii (strain SS-2004)</name>
    <name type="common">Xenorhabdus nematophila subsp. bovienii</name>
    <dbReference type="NCBI Taxonomy" id="406818"/>
    <lineage>
        <taxon>Bacteria</taxon>
        <taxon>Pseudomonadati</taxon>
        <taxon>Pseudomonadota</taxon>
        <taxon>Gammaproteobacteria</taxon>
        <taxon>Enterobacterales</taxon>
        <taxon>Morganellaceae</taxon>
        <taxon>Xenorhabdus</taxon>
    </lineage>
</organism>
<accession>D3UWU5</accession>
<evidence type="ECO:0000255" key="1">
    <source>
        <dbReference type="HAMAP-Rule" id="MF_00906"/>
    </source>
</evidence>
<name>ZAPC_XENBS</name>
<protein>
    <recommendedName>
        <fullName evidence="1">Cell division protein ZapC</fullName>
    </recommendedName>
</protein>
<sequence length="183" mass="21373">MKIRPDDQWRWYFDSEHSRVMLDLANGMVFRSRFLAKMLTDYAITMEEMPFSVDDAALYYAFEEHFRCINIASELRAELALNGVVAFRFMKPQMPKSWYFSSFSVMTKPEQGEIVQVRLQDCGTEVLFMVAEVGDSASLCLLAQQKLELSDRVMNFCDPIKIMNDRLMPYVEPTRETIYGRVI</sequence>
<comment type="function">
    <text evidence="1">Contributes to the efficiency of the cell division process by stabilizing the polymeric form of the cell division protein FtsZ. Acts by promoting interactions between FtsZ protofilaments and suppressing the GTPase activity of FtsZ.</text>
</comment>
<comment type="subunit">
    <text evidence="1">Interacts directly with FtsZ.</text>
</comment>
<comment type="subcellular location">
    <subcellularLocation>
        <location evidence="1">Cytoplasm</location>
    </subcellularLocation>
</comment>
<comment type="similarity">
    <text evidence="1">Belongs to the ZapC family.</text>
</comment>
<reference key="1">
    <citation type="journal article" date="2011" name="PLoS ONE">
        <title>The entomopathogenic bacterial endosymbionts xenorhabdus and photorhabdus: convergent lifestyles from divergent genomes.</title>
        <authorList>
            <person name="Chaston J.M."/>
            <person name="Suen G."/>
            <person name="Tucker S.L."/>
            <person name="Andersen A.W."/>
            <person name="Bhasin A."/>
            <person name="Bode E."/>
            <person name="Bode H.B."/>
            <person name="Brachmann A.O."/>
            <person name="Cowles C.E."/>
            <person name="Cowles K.N."/>
            <person name="Darby C."/>
            <person name="de Leon L."/>
            <person name="Drace K."/>
            <person name="Du Z."/>
            <person name="Givaudan A."/>
            <person name="Herbert Tran E.E."/>
            <person name="Jewell K.A."/>
            <person name="Knack J.J."/>
            <person name="Krasomil-Osterfeld K.C."/>
            <person name="Kukor R."/>
            <person name="Lanois A."/>
            <person name="Latreille P."/>
            <person name="Leimgruber N.K."/>
            <person name="Lipke C.M."/>
            <person name="Liu R."/>
            <person name="Lu X."/>
            <person name="Martens E.C."/>
            <person name="Marri P.R."/>
            <person name="Medigue C."/>
            <person name="Menard M.L."/>
            <person name="Miller N.M."/>
            <person name="Morales-Soto N."/>
            <person name="Norton S."/>
            <person name="Ogier J.C."/>
            <person name="Orchard S.S."/>
            <person name="Park D."/>
            <person name="Park Y."/>
            <person name="Qurollo B.A."/>
            <person name="Sugar D.R."/>
            <person name="Richards G.R."/>
            <person name="Rouy Z."/>
            <person name="Slominski B."/>
            <person name="Slominski K."/>
            <person name="Snyder H."/>
            <person name="Tjaden B.C."/>
            <person name="van der Hoeven R."/>
            <person name="Welch R.D."/>
            <person name="Wheeler C."/>
            <person name="Xiang B."/>
            <person name="Barbazuk B."/>
            <person name="Gaudriault S."/>
            <person name="Goodner B."/>
            <person name="Slater S.C."/>
            <person name="Forst S."/>
            <person name="Goldman B.S."/>
            <person name="Goodrich-Blair H."/>
        </authorList>
    </citation>
    <scope>NUCLEOTIDE SEQUENCE [LARGE SCALE GENOMIC DNA]</scope>
    <source>
        <strain>SS-2004</strain>
    </source>
</reference>
<proteinExistence type="inferred from homology"/>